<accession>P10063</accession>
<proteinExistence type="evidence at transcript level"/>
<keyword id="KW-1003">Cell membrane</keyword>
<keyword id="KW-0966">Cell projection</keyword>
<keyword id="KW-0868">Chloride</keyword>
<keyword id="KW-0869">Chloride channel</keyword>
<keyword id="KW-0968">Cytoplasmic vesicle</keyword>
<keyword id="KW-1015">Disulfide bond</keyword>
<keyword id="KW-0325">Glycoprotein</keyword>
<keyword id="KW-0407">Ion channel</keyword>
<keyword id="KW-0406">Ion transport</keyword>
<keyword id="KW-1071">Ligand-gated ion channel</keyword>
<keyword id="KW-0472">Membrane</keyword>
<keyword id="KW-0628">Postsynaptic cell membrane</keyword>
<keyword id="KW-0675">Receptor</keyword>
<keyword id="KW-1185">Reference proteome</keyword>
<keyword id="KW-0732">Signal</keyword>
<keyword id="KW-0770">Synapse</keyword>
<keyword id="KW-0812">Transmembrane</keyword>
<keyword id="KW-1133">Transmembrane helix</keyword>
<keyword id="KW-0813">Transport</keyword>
<gene>
    <name type="primary">GABRA2</name>
</gene>
<dbReference type="EMBL" id="X12361">
    <property type="protein sequence ID" value="CAA30924.1"/>
    <property type="molecule type" value="mRNA"/>
</dbReference>
<dbReference type="PIR" id="S12510">
    <property type="entry name" value="ACBOG2"/>
</dbReference>
<dbReference type="RefSeq" id="NP_776966.1">
    <property type="nucleotide sequence ID" value="NM_174541.2"/>
</dbReference>
<dbReference type="RefSeq" id="XP_010804413.1">
    <property type="nucleotide sequence ID" value="XM_010806111.1"/>
</dbReference>
<dbReference type="RefSeq" id="XP_015319236.1">
    <property type="nucleotide sequence ID" value="XM_015463750.1"/>
</dbReference>
<dbReference type="SMR" id="P10063"/>
<dbReference type="FunCoup" id="P10063">
    <property type="interactions" value="1044"/>
</dbReference>
<dbReference type="STRING" id="9913.ENSBTAP00000015688"/>
<dbReference type="ChEMBL" id="CHEMBL2094107"/>
<dbReference type="DrugCentral" id="P10063"/>
<dbReference type="GlyCosmos" id="P10063">
    <property type="glycosylation" value="3 sites, No reported glycans"/>
</dbReference>
<dbReference type="GlyGen" id="P10063">
    <property type="glycosylation" value="3 sites"/>
</dbReference>
<dbReference type="PaxDb" id="9913-ENSBTAP00000015688"/>
<dbReference type="GeneID" id="282236"/>
<dbReference type="KEGG" id="bta:282236"/>
<dbReference type="CTD" id="2555"/>
<dbReference type="eggNOG" id="KOG3642">
    <property type="taxonomic scope" value="Eukaryota"/>
</dbReference>
<dbReference type="InParanoid" id="P10063"/>
<dbReference type="OrthoDB" id="203862at2759"/>
<dbReference type="PRO" id="PR:P10063"/>
<dbReference type="Proteomes" id="UP000009136">
    <property type="component" value="Unplaced"/>
</dbReference>
<dbReference type="GO" id="GO:0034707">
    <property type="term" value="C:chloride channel complex"/>
    <property type="evidence" value="ECO:0007669"/>
    <property type="project" value="UniProtKB-KW"/>
</dbReference>
<dbReference type="GO" id="GO:0030659">
    <property type="term" value="C:cytoplasmic vesicle membrane"/>
    <property type="evidence" value="ECO:0007669"/>
    <property type="project" value="UniProtKB-SubCell"/>
</dbReference>
<dbReference type="GO" id="GO:0032590">
    <property type="term" value="C:dendrite membrane"/>
    <property type="evidence" value="ECO:0000318"/>
    <property type="project" value="GO_Central"/>
</dbReference>
<dbReference type="GO" id="GO:1902711">
    <property type="term" value="C:GABA-A receptor complex"/>
    <property type="evidence" value="ECO:0000318"/>
    <property type="project" value="GO_Central"/>
</dbReference>
<dbReference type="GO" id="GO:0098794">
    <property type="term" value="C:postsynapse"/>
    <property type="evidence" value="ECO:0000318"/>
    <property type="project" value="GO_Central"/>
</dbReference>
<dbReference type="GO" id="GO:0045211">
    <property type="term" value="C:postsynaptic membrane"/>
    <property type="evidence" value="ECO:0007669"/>
    <property type="project" value="UniProtKB-SubCell"/>
</dbReference>
<dbReference type="GO" id="GO:0004890">
    <property type="term" value="F:GABA-A receptor activity"/>
    <property type="evidence" value="ECO:0007669"/>
    <property type="project" value="InterPro"/>
</dbReference>
<dbReference type="GO" id="GO:0022851">
    <property type="term" value="F:GABA-gated chloride ion channel activity"/>
    <property type="evidence" value="ECO:0000318"/>
    <property type="project" value="GO_Central"/>
</dbReference>
<dbReference type="GO" id="GO:1902476">
    <property type="term" value="P:chloride transmembrane transport"/>
    <property type="evidence" value="ECO:0000318"/>
    <property type="project" value="GO_Central"/>
</dbReference>
<dbReference type="GO" id="GO:0007214">
    <property type="term" value="P:gamma-aminobutyric acid signaling pathway"/>
    <property type="evidence" value="ECO:0000318"/>
    <property type="project" value="GO_Central"/>
</dbReference>
<dbReference type="GO" id="GO:1904862">
    <property type="term" value="P:inhibitory synapse assembly"/>
    <property type="evidence" value="ECO:0000250"/>
    <property type="project" value="UniProtKB"/>
</dbReference>
<dbReference type="GO" id="GO:0051932">
    <property type="term" value="P:synaptic transmission, GABAergic"/>
    <property type="evidence" value="ECO:0000318"/>
    <property type="project" value="GO_Central"/>
</dbReference>
<dbReference type="CDD" id="cd19035">
    <property type="entry name" value="LGIC_ECD_GABAAR_A2"/>
    <property type="match status" value="1"/>
</dbReference>
<dbReference type="CDD" id="cd19052">
    <property type="entry name" value="LGIC_TM_GABAAR_alpha"/>
    <property type="match status" value="1"/>
</dbReference>
<dbReference type="FunFam" id="2.70.170.10:FF:000001">
    <property type="entry name" value="Gamma-aminobutyric acid A receptor subunit alpha-2"/>
    <property type="match status" value="1"/>
</dbReference>
<dbReference type="FunFam" id="1.20.58.390:FF:000002">
    <property type="entry name" value="Putative gamma-aminobutyric acid receptor subunit alpha-5"/>
    <property type="match status" value="1"/>
</dbReference>
<dbReference type="Gene3D" id="2.70.170.10">
    <property type="entry name" value="Neurotransmitter-gated ion-channel ligand-binding domain"/>
    <property type="match status" value="1"/>
</dbReference>
<dbReference type="Gene3D" id="1.20.58.390">
    <property type="entry name" value="Neurotransmitter-gated ion-channel transmembrane domain"/>
    <property type="match status" value="1"/>
</dbReference>
<dbReference type="InterPro" id="IPR006028">
    <property type="entry name" value="GABAA/Glycine_rcpt"/>
</dbReference>
<dbReference type="InterPro" id="IPR001390">
    <property type="entry name" value="GABAAa_rcpt"/>
</dbReference>
<dbReference type="InterPro" id="IPR005432">
    <property type="entry name" value="GABBAa2_rcpt"/>
</dbReference>
<dbReference type="InterPro" id="IPR047024">
    <property type="entry name" value="Gabra-1-6_TM"/>
</dbReference>
<dbReference type="InterPro" id="IPR047023">
    <property type="entry name" value="Gabra-2_ECD"/>
</dbReference>
<dbReference type="InterPro" id="IPR006202">
    <property type="entry name" value="Neur_chan_lig-bd"/>
</dbReference>
<dbReference type="InterPro" id="IPR036734">
    <property type="entry name" value="Neur_chan_lig-bd_sf"/>
</dbReference>
<dbReference type="InterPro" id="IPR006201">
    <property type="entry name" value="Neur_channel"/>
</dbReference>
<dbReference type="InterPro" id="IPR036719">
    <property type="entry name" value="Neuro-gated_channel_TM_sf"/>
</dbReference>
<dbReference type="InterPro" id="IPR038050">
    <property type="entry name" value="Neuro_actylchol_rec"/>
</dbReference>
<dbReference type="InterPro" id="IPR006029">
    <property type="entry name" value="Neurotrans-gated_channel_TM"/>
</dbReference>
<dbReference type="InterPro" id="IPR018000">
    <property type="entry name" value="Neurotransmitter_ion_chnl_CS"/>
</dbReference>
<dbReference type="NCBIfam" id="TIGR00860">
    <property type="entry name" value="LIC"/>
    <property type="match status" value="1"/>
</dbReference>
<dbReference type="PANTHER" id="PTHR18945">
    <property type="entry name" value="NEUROTRANSMITTER GATED ION CHANNEL"/>
    <property type="match status" value="1"/>
</dbReference>
<dbReference type="Pfam" id="PF02931">
    <property type="entry name" value="Neur_chan_LBD"/>
    <property type="match status" value="1"/>
</dbReference>
<dbReference type="Pfam" id="PF02932">
    <property type="entry name" value="Neur_chan_memb"/>
    <property type="match status" value="2"/>
</dbReference>
<dbReference type="PRINTS" id="PR01079">
    <property type="entry name" value="GABAARALPHA"/>
</dbReference>
<dbReference type="PRINTS" id="PR01615">
    <property type="entry name" value="GABAARALPHA2"/>
</dbReference>
<dbReference type="PRINTS" id="PR00253">
    <property type="entry name" value="GABAARECEPTR"/>
</dbReference>
<dbReference type="PRINTS" id="PR00252">
    <property type="entry name" value="NRIONCHANNEL"/>
</dbReference>
<dbReference type="SUPFAM" id="SSF90112">
    <property type="entry name" value="Neurotransmitter-gated ion-channel transmembrane pore"/>
    <property type="match status" value="1"/>
</dbReference>
<dbReference type="SUPFAM" id="SSF63712">
    <property type="entry name" value="Nicotinic receptor ligand binding domain-like"/>
    <property type="match status" value="1"/>
</dbReference>
<dbReference type="PROSITE" id="PS00236">
    <property type="entry name" value="NEUROTR_ION_CHANNEL"/>
    <property type="match status" value="1"/>
</dbReference>
<protein>
    <recommendedName>
        <fullName evidence="3">Gamma-aminobutyric acid receptor subunit alpha-2</fullName>
    </recommendedName>
    <alternativeName>
        <fullName evidence="3">GABA(A) receptor subunit alpha-2</fullName>
        <shortName evidence="3">GABAAR subunit alpha-2</shortName>
    </alternativeName>
</protein>
<name>GBRA2_BOVIN</name>
<reference key="1">
    <citation type="journal article" date="1988" name="Nature">
        <title>Structural and functional basis for GABAA receptor heterogeneity.</title>
        <authorList>
            <person name="Levitan E.S."/>
            <person name="Schofield P.R."/>
            <person name="Burt D.R."/>
            <person name="Rhee L.M."/>
            <person name="Wisdes W."/>
            <person name="Koehler M."/>
            <person name="Rodriguez H."/>
            <person name="Stephenson F.A."/>
            <person name="Darlison M.G."/>
            <person name="Barnard E.A."/>
            <person name="Seeburg P.H."/>
        </authorList>
    </citation>
    <scope>NUCLEOTIDE SEQUENCE [MRNA]</scope>
    <scope>FUNCTION</scope>
    <scope>ACTIVITY REGULATION</scope>
    <scope>TRANSPORTER ACTIVITY</scope>
    <source>
        <tissue>Brain</tissue>
    </source>
</reference>
<sequence>MKTKLNSSNMQLLLFVFLAWDPARLVLANIQEDEAKNNITIFTRILDRLLDGYDNRLRPGLGDSITEVFTNIYVTSFGPVSDTDMEYTIDVFFRQKWKDERLKFKGPMNILRLNNLMASKIWTPDTFFHNGKKSVAHNMTMPNKLLRIQDDGTLLYTMRLTVQAECPMHLEDFPMDAHSCPLKFGSYAYTTSEVTYIWTYNASDSVQVAPDGSRLNQYDLPGQSIGKETIKSSTGEYTVMTAHFHLKRKIGYFVIQTYLPCIMTVILSQVSFWLNRESVPARTVFGVTTVLTMTTLSISARNSLPKVAYATAMDWFIAVCYAFVFSALIEFATVNYFTKRGWAWDGKSVVNDKKKEKASVMIQNNAYAVAVANYAPNLSKDPVLSTISKSATTPEPNKKPENKPAEAKKTFNSVSKIDRMSRIVFPVLFGTFNLVYWATYLNREPVLGVSP</sequence>
<organism>
    <name type="scientific">Bos taurus</name>
    <name type="common">Bovine</name>
    <dbReference type="NCBI Taxonomy" id="9913"/>
    <lineage>
        <taxon>Eukaryota</taxon>
        <taxon>Metazoa</taxon>
        <taxon>Chordata</taxon>
        <taxon>Craniata</taxon>
        <taxon>Vertebrata</taxon>
        <taxon>Euteleostomi</taxon>
        <taxon>Mammalia</taxon>
        <taxon>Eutheria</taxon>
        <taxon>Laurasiatheria</taxon>
        <taxon>Artiodactyla</taxon>
        <taxon>Ruminantia</taxon>
        <taxon>Pecora</taxon>
        <taxon>Bovidae</taxon>
        <taxon>Bovinae</taxon>
        <taxon>Bos</taxon>
    </lineage>
</organism>
<feature type="signal peptide" evidence="7">
    <location>
        <begin position="1"/>
        <end position="28"/>
    </location>
</feature>
<feature type="chain" id="PRO_0000000432" description="Gamma-aminobutyric acid receptor subunit alpha-2">
    <location>
        <begin position="29"/>
        <end position="451"/>
    </location>
</feature>
<feature type="topological domain" description="Extracellular" evidence="9">
    <location>
        <begin position="29"/>
        <end position="249"/>
    </location>
</feature>
<feature type="transmembrane region" description="Helical" evidence="7">
    <location>
        <begin position="250"/>
        <end position="270"/>
    </location>
</feature>
<feature type="topological domain" description="Cytoplasmic" evidence="9">
    <location>
        <begin position="271"/>
        <end position="280"/>
    </location>
</feature>
<feature type="transmembrane region" description="Helical" evidence="7">
    <location>
        <begin position="281"/>
        <end position="300"/>
    </location>
</feature>
<feature type="topological domain" description="Extracellular" evidence="9">
    <location>
        <begin position="301"/>
        <end position="311"/>
    </location>
</feature>
<feature type="transmembrane region" description="Helical" evidence="7">
    <location>
        <begin position="312"/>
        <end position="332"/>
    </location>
</feature>
<feature type="topological domain" description="Cytoplasmic" evidence="9">
    <location>
        <begin position="333"/>
        <end position="420"/>
    </location>
</feature>
<feature type="transmembrane region" description="Helical" evidence="7">
    <location>
        <begin position="421"/>
        <end position="441"/>
    </location>
</feature>
<feature type="topological domain" description="Extracellular" evidence="9">
    <location>
        <begin position="442"/>
        <end position="451"/>
    </location>
</feature>
<feature type="binding site" evidence="1">
    <location>
        <position position="94"/>
    </location>
    <ligand>
        <name>4-aminobutanoate</name>
        <dbReference type="ChEBI" id="CHEBI:59888"/>
        <note>ligand shared with the neighboring beta subunit</note>
    </ligand>
</feature>
<feature type="binding site" evidence="6">
    <location>
        <position position="157"/>
    </location>
    <ligand>
        <name>4-aminobutanoate</name>
        <dbReference type="ChEBI" id="CHEBI:59888"/>
        <note>ligand shared with the neighboring beta subunit</note>
    </ligand>
</feature>
<feature type="glycosylation site" description="N-linked (GlcNAc...) asparagine" evidence="7">
    <location>
        <position position="38"/>
    </location>
</feature>
<feature type="glycosylation site" description="N-linked (GlcNAc...) asparagine" evidence="7">
    <location>
        <position position="138"/>
    </location>
</feature>
<feature type="glycosylation site" description="N-linked (GlcNAc...) asparagine" evidence="7">
    <location>
        <position position="201"/>
    </location>
</feature>
<feature type="disulfide bond" evidence="4">
    <location>
        <begin position="166"/>
        <end position="180"/>
    </location>
</feature>
<comment type="function">
    <text evidence="1 3 8">Alpha subunit of the heteropentameric ligand-gated chloride channel gated by gamma-aminobutyric acid (GABA), a major inhibitory neurotransmitter in the brain (PubMed:2842688). GABA-gated chloride channels, also named GABA(A) receptors (GABAAR), consist of five subunits arranged around a central pore and contain GABA active binding site(s) located at the alpha and beta subunit interface(s) (By similarity). When activated by GABA, GABAARs selectively allow the flow of chloride anions across the cell membrane down their electrochemical gradient (PubMed:2842688). Chloride influx into the postsynaptic neuron following GABAAR opening decreases the neuron ability to generate a new action potential, thereby reducing nerve transmission (PubMed:2842688). The alpha-2 subunit exhibits synaptogenic activity together with beta-2 and very little to no activity together with beta-3, the gamma-2 subunit being necessary but not sufficient to induce rapid synaptic contacts formation (By similarity).</text>
</comment>
<comment type="catalytic activity">
    <reaction evidence="8">
        <text>chloride(in) = chloride(out)</text>
        <dbReference type="Rhea" id="RHEA:29823"/>
        <dbReference type="ChEBI" id="CHEBI:17996"/>
    </reaction>
</comment>
<comment type="activity regulation">
    <text evidence="8">Activated by pentobarbital (PubMed:2842688). Inhibited by the antagonist bicuculline (PubMed:2842688).</text>
</comment>
<comment type="subunit">
    <text evidence="2 3 5">Heteropentamer, formed by a combination of alpha (GABRA1-6), beta (GABRB1-3), gamma (GABRG1-3), delta (GABRD), epsilon (GABRE), rho (GABRR1-3), pi (GABRP) and theta (GABRQ) subunits, each subunit exhibiting distinct physiological and pharmacological properties (By similarity). Interacts with UBQLN1 (By similarity). Interacts with KIF21B (By similarity). Interacts with LHFPL4 (By similarity). Interacts with SHISA7; interaction leads to the regulation of GABA(A) receptor trafficking, channel deactivation kinetics and pharmacology (By similarity).</text>
</comment>
<comment type="subcellular location">
    <subcellularLocation>
        <location evidence="3">Postsynaptic cell membrane</location>
        <topology evidence="7">Multi-pass membrane protein</topology>
    </subcellularLocation>
    <subcellularLocation>
        <location evidence="3">Cell membrane</location>
        <topology evidence="7">Multi-pass membrane protein</topology>
    </subcellularLocation>
    <subcellularLocation>
        <location evidence="2">Cytoplasmic vesicle membrane</location>
    </subcellularLocation>
    <subcellularLocation>
        <location evidence="3">Cell projection</location>
        <location evidence="3">Dendrite</location>
    </subcellularLocation>
</comment>
<comment type="domain">
    <text evidence="3">The extracellular domain contributes to synaptic contact formation.</text>
</comment>
<comment type="domain">
    <text evidence="1">The GABA-binding pockets are located at the interface between neighboring alpha and beta subunits.</text>
</comment>
<comment type="domain">
    <text evidence="1">GABAARs subunits share a common topological structure: a peptide sequence made up of a long extracellular N-terminal, four transmembrane domains, intracellular or cytoplasmic domain located between the third and the fourth transmembrane domains.</text>
</comment>
<comment type="PTM">
    <text evidence="3">Glycosylated.</text>
</comment>
<comment type="similarity">
    <text evidence="9">Belongs to the ligand-gated ion channel (TC 1.A.9) family. Gamma-aminobutyric acid receptor (TC 1.A.9.5) subfamily. GABRA2 sub-subfamily.</text>
</comment>
<evidence type="ECO:0000250" key="1">
    <source>
        <dbReference type="UniProtKB" id="P14867"/>
    </source>
</evidence>
<evidence type="ECO:0000250" key="2">
    <source>
        <dbReference type="UniProtKB" id="P23576"/>
    </source>
</evidence>
<evidence type="ECO:0000250" key="3">
    <source>
        <dbReference type="UniProtKB" id="P26048"/>
    </source>
</evidence>
<evidence type="ECO:0000250" key="4">
    <source>
        <dbReference type="UniProtKB" id="P28472"/>
    </source>
</evidence>
<evidence type="ECO:0000250" key="5">
    <source>
        <dbReference type="UniProtKB" id="P47869"/>
    </source>
</evidence>
<evidence type="ECO:0000250" key="6">
    <source>
        <dbReference type="UniProtKB" id="P62813"/>
    </source>
</evidence>
<evidence type="ECO:0000255" key="7"/>
<evidence type="ECO:0000269" key="8">
    <source>
    </source>
</evidence>
<evidence type="ECO:0000305" key="9"/>